<comment type="function">
    <text evidence="1">Highly potent vasoconstrictor.</text>
</comment>
<comment type="subcellular location">
    <subcellularLocation>
        <location evidence="1">Secreted</location>
    </subcellularLocation>
</comment>
<comment type="similarity">
    <text evidence="3">Belongs to the urotensin-2 family.</text>
</comment>
<name>UTS2_MACMU</name>
<keyword id="KW-0165">Cleavage on pair of basic residues</keyword>
<keyword id="KW-1015">Disulfide bond</keyword>
<keyword id="KW-0372">Hormone</keyword>
<keyword id="KW-1185">Reference proteome</keyword>
<keyword id="KW-0964">Secreted</keyword>
<keyword id="KW-0732">Signal</keyword>
<evidence type="ECO:0000250" key="1"/>
<evidence type="ECO:0000255" key="2"/>
<evidence type="ECO:0000305" key="3"/>
<dbReference type="EMBL" id="AY065983">
    <property type="protein sequence ID" value="AAL55429.1"/>
    <property type="molecule type" value="mRNA"/>
</dbReference>
<dbReference type="RefSeq" id="NP_001028067.1">
    <property type="nucleotide sequence ID" value="NM_001032895.1"/>
</dbReference>
<dbReference type="FunCoup" id="Q8HYC2">
    <property type="interactions" value="507"/>
</dbReference>
<dbReference type="STRING" id="9544.ENSMMUP00000000838"/>
<dbReference type="BindingDB" id="Q8HYC2"/>
<dbReference type="PaxDb" id="9544-ENSMMUP00000000838"/>
<dbReference type="Ensembl" id="ENSMMUT00000000900.4">
    <property type="protein sequence ID" value="ENSMMUP00000000838.4"/>
    <property type="gene ID" value="ENSMMUG00000000625.4"/>
</dbReference>
<dbReference type="GeneID" id="574246"/>
<dbReference type="KEGG" id="mcc:574246"/>
<dbReference type="CTD" id="10911"/>
<dbReference type="VEuPathDB" id="HostDB:ENSMMUG00000000625"/>
<dbReference type="VGNC" id="VGNC:78750">
    <property type="gene designation" value="UTS2"/>
</dbReference>
<dbReference type="eggNOG" id="ENOG502SCRX">
    <property type="taxonomic scope" value="Eukaryota"/>
</dbReference>
<dbReference type="GeneTree" id="ENSGT00510000049583"/>
<dbReference type="HOGENOM" id="CLU_156959_0_0_1"/>
<dbReference type="InParanoid" id="Q8HYC2"/>
<dbReference type="OMA" id="ETFYGNH"/>
<dbReference type="OrthoDB" id="7788983at2759"/>
<dbReference type="TreeFam" id="TF330799"/>
<dbReference type="PRO" id="PR:Q8HYC2"/>
<dbReference type="Proteomes" id="UP000006718">
    <property type="component" value="Chromosome 1"/>
</dbReference>
<dbReference type="Bgee" id="ENSMMUG00000000625">
    <property type="expression patterns" value="Expressed in spleen and 15 other cell types or tissues"/>
</dbReference>
<dbReference type="GO" id="GO:0005615">
    <property type="term" value="C:extracellular space"/>
    <property type="evidence" value="ECO:0000318"/>
    <property type="project" value="GO_Central"/>
</dbReference>
<dbReference type="GO" id="GO:0005179">
    <property type="term" value="F:hormone activity"/>
    <property type="evidence" value="ECO:0007669"/>
    <property type="project" value="UniProtKB-KW"/>
</dbReference>
<dbReference type="GO" id="GO:0097746">
    <property type="term" value="P:blood vessel diameter maintenance"/>
    <property type="evidence" value="ECO:0007669"/>
    <property type="project" value="InterPro"/>
</dbReference>
<dbReference type="GO" id="GO:0008217">
    <property type="term" value="P:regulation of blood pressure"/>
    <property type="evidence" value="ECO:0000318"/>
    <property type="project" value="GO_Central"/>
</dbReference>
<dbReference type="InterPro" id="IPR001483">
    <property type="entry name" value="Urotensin_II"/>
</dbReference>
<dbReference type="PANTHER" id="PTHR14447">
    <property type="entry name" value="UROTENSIN 2"/>
    <property type="match status" value="1"/>
</dbReference>
<dbReference type="PANTHER" id="PTHR14447:SF0">
    <property type="entry name" value="UROTENSIN-2"/>
    <property type="match status" value="1"/>
</dbReference>
<dbReference type="Pfam" id="PF02083">
    <property type="entry name" value="Urotensin_II"/>
    <property type="match status" value="1"/>
</dbReference>
<dbReference type="PROSITE" id="PS00984">
    <property type="entry name" value="UROTENSIN_II"/>
    <property type="match status" value="1"/>
</dbReference>
<protein>
    <recommendedName>
        <fullName>Urotensin-2</fullName>
    </recommendedName>
    <alternativeName>
        <fullName>Urotensin II</fullName>
        <shortName>U-II</shortName>
        <shortName>UII</shortName>
    </alternativeName>
</protein>
<proteinExistence type="evidence at transcript level"/>
<gene>
    <name type="primary">UTS2</name>
</gene>
<feature type="signal peptide" evidence="2">
    <location>
        <begin position="1"/>
        <end position="20"/>
    </location>
</feature>
<feature type="propeptide" id="PRO_0000036348" evidence="1">
    <location>
        <begin position="21"/>
        <end position="111"/>
    </location>
</feature>
<feature type="peptide" id="PRO_0000036349" description="Urotensin-2">
    <location>
        <begin position="115"/>
        <end position="125"/>
    </location>
</feature>
<feature type="disulfide bond" evidence="1">
    <location>
        <begin position="119"/>
        <end position="124"/>
    </location>
</feature>
<organism>
    <name type="scientific">Macaca mulatta</name>
    <name type="common">Rhesus macaque</name>
    <dbReference type="NCBI Taxonomy" id="9544"/>
    <lineage>
        <taxon>Eukaryota</taxon>
        <taxon>Metazoa</taxon>
        <taxon>Chordata</taxon>
        <taxon>Craniata</taxon>
        <taxon>Vertebrata</taxon>
        <taxon>Euteleostomi</taxon>
        <taxon>Mammalia</taxon>
        <taxon>Eutheria</taxon>
        <taxon>Euarchontoglires</taxon>
        <taxon>Primates</taxon>
        <taxon>Haplorrhini</taxon>
        <taxon>Catarrhini</taxon>
        <taxon>Cercopithecidae</taxon>
        <taxon>Cercopithecinae</taxon>
        <taxon>Macaca</taxon>
    </lineage>
</organism>
<reference key="1">
    <citation type="journal article" date="2002" name="Br. J. Pharmacol.">
        <title>Molecular and pharmacological characterization of genes encoding urotensin-II peptides and their cognate G-protein-coupled receptors from the mouse and monkey.</title>
        <authorList>
            <person name="Elshourbagy N.A."/>
            <person name="Douglas S.A."/>
            <person name="Shabon U."/>
            <person name="Harrison S."/>
            <person name="Duddy G."/>
            <person name="Sechler J.L."/>
            <person name="Ao Z."/>
            <person name="Maleeff B.E."/>
            <person name="Naselsky D."/>
            <person name="Disa J."/>
            <person name="Aiyar N.V."/>
        </authorList>
    </citation>
    <scope>NUCLEOTIDE SEQUENCE [MRNA]</scope>
</reference>
<accession>Q8HYC2</accession>
<sequence>MYKLASCCLLFIGFLNPLFSLPLLDSGEVSLQLSAPHEDAPLTSEELERASLLQILPEMLLGAERGDSLRKADSSTNIFNPRGNLRKFQDFSGQDPDILLSHLLARIRKPYKKRETPDCFWKYCV</sequence>